<gene>
    <name evidence="1" type="primary">rplU</name>
    <name type="ordered locus">Ldb1431</name>
</gene>
<sequence>MYAVIKTGGKQYKVAEGESIFVEKLDVQAGEEVVFDQVILVANGDDVKVGTPLVEGAKVVASVDKQGKEKKVVTFKYKPKKHSHSKYGHRQPYTKVTVKSIEA</sequence>
<reference key="1">
    <citation type="journal article" date="2006" name="Proc. Natl. Acad. Sci. U.S.A.">
        <title>The complete genome sequence of Lactobacillus bulgaricus reveals extensive and ongoing reductive evolution.</title>
        <authorList>
            <person name="van de Guchte M."/>
            <person name="Penaud S."/>
            <person name="Grimaldi C."/>
            <person name="Barbe V."/>
            <person name="Bryson K."/>
            <person name="Nicolas P."/>
            <person name="Robert C."/>
            <person name="Oztas S."/>
            <person name="Mangenot S."/>
            <person name="Couloux A."/>
            <person name="Loux V."/>
            <person name="Dervyn R."/>
            <person name="Bossy R."/>
            <person name="Bolotin A."/>
            <person name="Batto J.-M."/>
            <person name="Walunas T."/>
            <person name="Gibrat J.-F."/>
            <person name="Bessieres P."/>
            <person name="Weissenbach J."/>
            <person name="Ehrlich S.D."/>
            <person name="Maguin E."/>
        </authorList>
    </citation>
    <scope>NUCLEOTIDE SEQUENCE [LARGE SCALE GENOMIC DNA]</scope>
    <source>
        <strain>ATCC 11842 / DSM 20081 / BCRC 10696 / JCM 1002 / NBRC 13953 / NCIMB 11778 / NCTC 12712 / WDCM 00102 / Lb 14</strain>
    </source>
</reference>
<proteinExistence type="inferred from homology"/>
<comment type="function">
    <text evidence="1">This protein binds to 23S rRNA in the presence of protein L20.</text>
</comment>
<comment type="subunit">
    <text evidence="1">Part of the 50S ribosomal subunit. Contacts protein L20.</text>
</comment>
<comment type="similarity">
    <text evidence="1">Belongs to the bacterial ribosomal protein bL21 family.</text>
</comment>
<keyword id="KW-1185">Reference proteome</keyword>
<keyword id="KW-0687">Ribonucleoprotein</keyword>
<keyword id="KW-0689">Ribosomal protein</keyword>
<keyword id="KW-0694">RNA-binding</keyword>
<keyword id="KW-0699">rRNA-binding</keyword>
<feature type="chain" id="PRO_0000269329" description="Large ribosomal subunit protein bL21">
    <location>
        <begin position="1"/>
        <end position="103"/>
    </location>
</feature>
<accession>Q1G9G5</accession>
<dbReference type="EMBL" id="CR954253">
    <property type="protein sequence ID" value="CAI98232.1"/>
    <property type="molecule type" value="Genomic_DNA"/>
</dbReference>
<dbReference type="RefSeq" id="WP_003618434.1">
    <property type="nucleotide sequence ID" value="NZ_JQAV01000009.1"/>
</dbReference>
<dbReference type="SMR" id="Q1G9G5"/>
<dbReference type="STRING" id="390333.Ldb1431"/>
<dbReference type="KEGG" id="ldb:Ldb1431"/>
<dbReference type="PATRIC" id="fig|390333.13.peg.1937"/>
<dbReference type="eggNOG" id="COG0261">
    <property type="taxonomic scope" value="Bacteria"/>
</dbReference>
<dbReference type="HOGENOM" id="CLU_061463_3_2_9"/>
<dbReference type="BioCyc" id="LDEL390333:LDB_RS06155-MONOMER"/>
<dbReference type="Proteomes" id="UP000001259">
    <property type="component" value="Chromosome"/>
</dbReference>
<dbReference type="GO" id="GO:0005737">
    <property type="term" value="C:cytoplasm"/>
    <property type="evidence" value="ECO:0007669"/>
    <property type="project" value="UniProtKB-ARBA"/>
</dbReference>
<dbReference type="GO" id="GO:1990904">
    <property type="term" value="C:ribonucleoprotein complex"/>
    <property type="evidence" value="ECO:0007669"/>
    <property type="project" value="UniProtKB-KW"/>
</dbReference>
<dbReference type="GO" id="GO:0005840">
    <property type="term" value="C:ribosome"/>
    <property type="evidence" value="ECO:0007669"/>
    <property type="project" value="UniProtKB-KW"/>
</dbReference>
<dbReference type="GO" id="GO:0019843">
    <property type="term" value="F:rRNA binding"/>
    <property type="evidence" value="ECO:0007669"/>
    <property type="project" value="UniProtKB-UniRule"/>
</dbReference>
<dbReference type="GO" id="GO:0003735">
    <property type="term" value="F:structural constituent of ribosome"/>
    <property type="evidence" value="ECO:0007669"/>
    <property type="project" value="InterPro"/>
</dbReference>
<dbReference type="GO" id="GO:0006412">
    <property type="term" value="P:translation"/>
    <property type="evidence" value="ECO:0007669"/>
    <property type="project" value="UniProtKB-UniRule"/>
</dbReference>
<dbReference type="HAMAP" id="MF_01363">
    <property type="entry name" value="Ribosomal_bL21"/>
    <property type="match status" value="1"/>
</dbReference>
<dbReference type="InterPro" id="IPR028909">
    <property type="entry name" value="bL21-like"/>
</dbReference>
<dbReference type="InterPro" id="IPR036164">
    <property type="entry name" value="bL21-like_sf"/>
</dbReference>
<dbReference type="InterPro" id="IPR001787">
    <property type="entry name" value="Ribosomal_bL21"/>
</dbReference>
<dbReference type="InterPro" id="IPR018258">
    <property type="entry name" value="Ribosomal_bL21_CS"/>
</dbReference>
<dbReference type="NCBIfam" id="TIGR00061">
    <property type="entry name" value="L21"/>
    <property type="match status" value="1"/>
</dbReference>
<dbReference type="PANTHER" id="PTHR21349">
    <property type="entry name" value="50S RIBOSOMAL PROTEIN L21"/>
    <property type="match status" value="1"/>
</dbReference>
<dbReference type="PANTHER" id="PTHR21349:SF0">
    <property type="entry name" value="LARGE RIBOSOMAL SUBUNIT PROTEIN BL21M"/>
    <property type="match status" value="1"/>
</dbReference>
<dbReference type="Pfam" id="PF00829">
    <property type="entry name" value="Ribosomal_L21p"/>
    <property type="match status" value="1"/>
</dbReference>
<dbReference type="SUPFAM" id="SSF141091">
    <property type="entry name" value="L21p-like"/>
    <property type="match status" value="1"/>
</dbReference>
<dbReference type="PROSITE" id="PS01169">
    <property type="entry name" value="RIBOSOMAL_L21"/>
    <property type="match status" value="1"/>
</dbReference>
<protein>
    <recommendedName>
        <fullName evidence="1">Large ribosomal subunit protein bL21</fullName>
    </recommendedName>
    <alternativeName>
        <fullName evidence="2">50S ribosomal protein L21</fullName>
    </alternativeName>
</protein>
<evidence type="ECO:0000255" key="1">
    <source>
        <dbReference type="HAMAP-Rule" id="MF_01363"/>
    </source>
</evidence>
<evidence type="ECO:0000305" key="2"/>
<name>RL21_LACDA</name>
<organism>
    <name type="scientific">Lactobacillus delbrueckii subsp. bulgaricus (strain ATCC 11842 / DSM 20081 / BCRC 10696 / JCM 1002 / NBRC 13953 / NCIMB 11778 / NCTC 12712 / WDCM 00102 / Lb 14)</name>
    <dbReference type="NCBI Taxonomy" id="390333"/>
    <lineage>
        <taxon>Bacteria</taxon>
        <taxon>Bacillati</taxon>
        <taxon>Bacillota</taxon>
        <taxon>Bacilli</taxon>
        <taxon>Lactobacillales</taxon>
        <taxon>Lactobacillaceae</taxon>
        <taxon>Lactobacillus</taxon>
    </lineage>
</organism>